<accession>Q9P6N5</accession>
<evidence type="ECO:0000250" key="1"/>
<evidence type="ECO:0000250" key="2">
    <source>
        <dbReference type="UniProtKB" id="P0A924"/>
    </source>
</evidence>
<evidence type="ECO:0000255" key="3"/>
<evidence type="ECO:0000305" key="4"/>
<reference key="1">
    <citation type="journal article" date="2002" name="Nature">
        <title>The genome sequence of Schizosaccharomyces pombe.</title>
        <authorList>
            <person name="Wood V."/>
            <person name="Gwilliam R."/>
            <person name="Rajandream M.A."/>
            <person name="Lyne M.H."/>
            <person name="Lyne R."/>
            <person name="Stewart A."/>
            <person name="Sgouros J.G."/>
            <person name="Peat N."/>
            <person name="Hayles J."/>
            <person name="Baker S.G."/>
            <person name="Basham D."/>
            <person name="Bowman S."/>
            <person name="Brooks K."/>
            <person name="Brown D."/>
            <person name="Brown S."/>
            <person name="Chillingworth T."/>
            <person name="Churcher C.M."/>
            <person name="Collins M."/>
            <person name="Connor R."/>
            <person name="Cronin A."/>
            <person name="Davis P."/>
            <person name="Feltwell T."/>
            <person name="Fraser A."/>
            <person name="Gentles S."/>
            <person name="Goble A."/>
            <person name="Hamlin N."/>
            <person name="Harris D.E."/>
            <person name="Hidalgo J."/>
            <person name="Hodgson G."/>
            <person name="Holroyd S."/>
            <person name="Hornsby T."/>
            <person name="Howarth S."/>
            <person name="Huckle E.J."/>
            <person name="Hunt S."/>
            <person name="Jagels K."/>
            <person name="James K.D."/>
            <person name="Jones L."/>
            <person name="Jones M."/>
            <person name="Leather S."/>
            <person name="McDonald S."/>
            <person name="McLean J."/>
            <person name="Mooney P."/>
            <person name="Moule S."/>
            <person name="Mungall K.L."/>
            <person name="Murphy L.D."/>
            <person name="Niblett D."/>
            <person name="Odell C."/>
            <person name="Oliver K."/>
            <person name="O'Neil S."/>
            <person name="Pearson D."/>
            <person name="Quail M.A."/>
            <person name="Rabbinowitsch E."/>
            <person name="Rutherford K.M."/>
            <person name="Rutter S."/>
            <person name="Saunders D."/>
            <person name="Seeger K."/>
            <person name="Sharp S."/>
            <person name="Skelton J."/>
            <person name="Simmonds M.N."/>
            <person name="Squares R."/>
            <person name="Squares S."/>
            <person name="Stevens K."/>
            <person name="Taylor K."/>
            <person name="Taylor R.G."/>
            <person name="Tivey A."/>
            <person name="Walsh S.V."/>
            <person name="Warren T."/>
            <person name="Whitehead S."/>
            <person name="Woodward J.R."/>
            <person name="Volckaert G."/>
            <person name="Aert R."/>
            <person name="Robben J."/>
            <person name="Grymonprez B."/>
            <person name="Weltjens I."/>
            <person name="Vanstreels E."/>
            <person name="Rieger M."/>
            <person name="Schaefer M."/>
            <person name="Mueller-Auer S."/>
            <person name="Gabel C."/>
            <person name="Fuchs M."/>
            <person name="Duesterhoeft A."/>
            <person name="Fritzc C."/>
            <person name="Holzer E."/>
            <person name="Moestl D."/>
            <person name="Hilbert H."/>
            <person name="Borzym K."/>
            <person name="Langer I."/>
            <person name="Beck A."/>
            <person name="Lehrach H."/>
            <person name="Reinhardt R."/>
            <person name="Pohl T.M."/>
            <person name="Eger P."/>
            <person name="Zimmermann W."/>
            <person name="Wedler H."/>
            <person name="Wambutt R."/>
            <person name="Purnelle B."/>
            <person name="Goffeau A."/>
            <person name="Cadieu E."/>
            <person name="Dreano S."/>
            <person name="Gloux S."/>
            <person name="Lelaure V."/>
            <person name="Mottier S."/>
            <person name="Galibert F."/>
            <person name="Aves S.J."/>
            <person name="Xiang Z."/>
            <person name="Hunt C."/>
            <person name="Moore K."/>
            <person name="Hurst S.M."/>
            <person name="Lucas M."/>
            <person name="Rochet M."/>
            <person name="Gaillardin C."/>
            <person name="Tallada V.A."/>
            <person name="Garzon A."/>
            <person name="Thode G."/>
            <person name="Daga R.R."/>
            <person name="Cruzado L."/>
            <person name="Jimenez J."/>
            <person name="Sanchez M."/>
            <person name="del Rey F."/>
            <person name="Benito J."/>
            <person name="Dominguez A."/>
            <person name="Revuelta J.L."/>
            <person name="Moreno S."/>
            <person name="Armstrong J."/>
            <person name="Forsburg S.L."/>
            <person name="Cerutti L."/>
            <person name="Lowe T."/>
            <person name="McCombie W.R."/>
            <person name="Paulsen I."/>
            <person name="Potashkin J."/>
            <person name="Shpakovski G.V."/>
            <person name="Ussery D."/>
            <person name="Barrell B.G."/>
            <person name="Nurse P."/>
        </authorList>
    </citation>
    <scope>NUCLEOTIDE SEQUENCE [LARGE SCALE GENOMIC DNA]</scope>
    <source>
        <strain>972 / ATCC 24843</strain>
    </source>
</reference>
<feature type="chain" id="PRO_0000359401" description="Dihydrosphingosine 1-phosphate phosphatase C823.11">
    <location>
        <begin position="1"/>
        <end position="411"/>
    </location>
</feature>
<feature type="topological domain" description="Lumenal" evidence="1">
    <location>
        <begin position="1"/>
        <end position="74"/>
    </location>
</feature>
<feature type="transmembrane region" description="Helical; Name=1" evidence="3">
    <location>
        <begin position="75"/>
        <end position="95"/>
    </location>
</feature>
<feature type="topological domain" description="Cytoplasmic" evidence="1">
    <location>
        <begin position="96"/>
        <end position="99"/>
    </location>
</feature>
<feature type="transmembrane region" description="Helical; Name=2" evidence="3">
    <location>
        <begin position="100"/>
        <end position="120"/>
    </location>
</feature>
<feature type="topological domain" description="Lumenal" evidence="1">
    <location>
        <begin position="121"/>
        <end position="170"/>
    </location>
</feature>
<feature type="transmembrane region" description="Helical; Name=3" evidence="3">
    <location>
        <begin position="171"/>
        <end position="191"/>
    </location>
</feature>
<feature type="topological domain" description="Cytoplasmic" evidence="1">
    <location>
        <begin position="192"/>
        <end position="195"/>
    </location>
</feature>
<feature type="transmembrane region" description="Helical; Name=4" evidence="3">
    <location>
        <begin position="196"/>
        <end position="216"/>
    </location>
</feature>
<feature type="topological domain" description="Lumenal" evidence="1">
    <location>
        <begin position="217"/>
        <end position="233"/>
    </location>
</feature>
<feature type="transmembrane region" description="Helical; Name=5" evidence="3">
    <location>
        <begin position="234"/>
        <end position="254"/>
    </location>
</feature>
<feature type="topological domain" description="Cytoplasmic" evidence="1">
    <location>
        <begin position="255"/>
        <end position="259"/>
    </location>
</feature>
<feature type="transmembrane region" description="Helical; Name=6" evidence="3">
    <location>
        <begin position="260"/>
        <end position="280"/>
    </location>
</feature>
<feature type="topological domain" description="Lumenal" evidence="1">
    <location>
        <begin position="281"/>
        <end position="293"/>
    </location>
</feature>
<feature type="transmembrane region" description="Helical; Name=7" evidence="3">
    <location>
        <begin position="294"/>
        <end position="314"/>
    </location>
</feature>
<feature type="topological domain" description="Cytoplasmic" evidence="1">
    <location>
        <begin position="315"/>
        <end position="387"/>
    </location>
</feature>
<feature type="transmembrane region" description="Helical; Name=8" evidence="3">
    <location>
        <begin position="388"/>
        <end position="408"/>
    </location>
</feature>
<feature type="topological domain" description="Lumenal" evidence="1">
    <location>
        <begin position="409"/>
        <end position="411"/>
    </location>
</feature>
<feature type="region of interest" description="Phosphatase sequence motif I" evidence="4">
    <location>
        <begin position="115"/>
        <end position="123"/>
    </location>
</feature>
<feature type="region of interest" description="Phosphatase sequence motif II" evidence="4">
    <location>
        <begin position="144"/>
        <end position="147"/>
    </location>
</feature>
<feature type="region of interest" description="Phosphatase sequence motif III" evidence="4">
    <location>
        <begin position="191"/>
        <end position="202"/>
    </location>
</feature>
<feature type="active site" description="Proton donor" evidence="2">
    <location>
        <position position="147"/>
    </location>
</feature>
<feature type="active site" description="Nucleophile" evidence="2">
    <location>
        <position position="198"/>
    </location>
</feature>
<feature type="site" description="Stabilizes the active site histidine for nucleophilic attack" evidence="2">
    <location>
        <position position="202"/>
    </location>
</feature>
<name>DS1PP_SCHPO</name>
<keyword id="KW-0256">Endoplasmic reticulum</keyword>
<keyword id="KW-0378">Hydrolase</keyword>
<keyword id="KW-0443">Lipid metabolism</keyword>
<keyword id="KW-0472">Membrane</keyword>
<keyword id="KW-1185">Reference proteome</keyword>
<keyword id="KW-0746">Sphingolipid metabolism</keyword>
<keyword id="KW-0812">Transmembrane</keyword>
<keyword id="KW-1133">Transmembrane helix</keyword>
<gene>
    <name type="ORF">SPAC823.11</name>
</gene>
<proteinExistence type="inferred from homology"/>
<sequence length="411" mass="46847">MVHKKKNVDIPSSQKYLGIQHVNFYSNAFGKESLRFQLRELILPIVRKETRLLYKIQSFFRNPWLDVYFMYTATLGTHVFFMLALPIFFWSGCIYYTLDITQLFAAGVYFSGCIKDYFCLPRPRSPPMVRLTLSSDAEYEYGFPSTHTTNAMATGFYSLFLLLSMSDSMSSISYYFLLSLVLLYIASISLGRIYCGMHGFMDVSTGTILGVTLAIFQWKYADFFHNVWSSSSTSVPILSVVLALFFIWFHPQPAERCICLEDSISFISVIMGIDLGTWFASPESLSHLHDNLNSYFLLKFFVRVLFGVCMILIWKSFAKQALLAVLPPIFKSLRLSYLEPKSQSEKGIRAATGSNHSPGNIGTELGVITSHQSHPHPVRFDIETIARIIVYSGIGFLCTYFAPKVFLKWKI</sequence>
<protein>
    <recommendedName>
        <fullName>Dihydrosphingosine 1-phosphate phosphatase C823.11</fullName>
        <ecNumber>3.1.3.-</ecNumber>
    </recommendedName>
</protein>
<dbReference type="EC" id="3.1.3.-"/>
<dbReference type="EMBL" id="CU329670">
    <property type="protein sequence ID" value="CAB90156.1"/>
    <property type="molecule type" value="Genomic_DNA"/>
</dbReference>
<dbReference type="FunCoup" id="Q9P6N5">
    <property type="interactions" value="346"/>
</dbReference>
<dbReference type="STRING" id="284812.Q9P6N5"/>
<dbReference type="PaxDb" id="4896-SPAC823.11.1"/>
<dbReference type="EnsemblFungi" id="SPAC823.11.1">
    <property type="protein sequence ID" value="SPAC823.11.1:pep"/>
    <property type="gene ID" value="SPAC823.11"/>
</dbReference>
<dbReference type="KEGG" id="spo:2543496"/>
<dbReference type="PomBase" id="SPAC823.11"/>
<dbReference type="VEuPathDB" id="FungiDB:SPAC823.11"/>
<dbReference type="eggNOG" id="KOG2822">
    <property type="taxonomic scope" value="Eukaryota"/>
</dbReference>
<dbReference type="HOGENOM" id="CLU_019266_1_0_1"/>
<dbReference type="InParanoid" id="Q9P6N5"/>
<dbReference type="OMA" id="GRWEYPY"/>
<dbReference type="PhylomeDB" id="Q9P6N5"/>
<dbReference type="Reactome" id="R-SPO-9845614">
    <property type="pathway name" value="Sphingolipid catabolism"/>
</dbReference>
<dbReference type="PRO" id="PR:Q9P6N5"/>
<dbReference type="Proteomes" id="UP000002485">
    <property type="component" value="Chromosome I"/>
</dbReference>
<dbReference type="GO" id="GO:0005789">
    <property type="term" value="C:endoplasmic reticulum membrane"/>
    <property type="evidence" value="ECO:0000318"/>
    <property type="project" value="GO_Central"/>
</dbReference>
<dbReference type="GO" id="GO:0042392">
    <property type="term" value="F:sphingosine-1-phosphate phosphatase activity"/>
    <property type="evidence" value="ECO:0000318"/>
    <property type="project" value="GO_Central"/>
</dbReference>
<dbReference type="GO" id="GO:0046839">
    <property type="term" value="P:phospholipid dephosphorylation"/>
    <property type="evidence" value="ECO:0000318"/>
    <property type="project" value="GO_Central"/>
</dbReference>
<dbReference type="GO" id="GO:0030148">
    <property type="term" value="P:sphingolipid biosynthetic process"/>
    <property type="evidence" value="ECO:0000266"/>
    <property type="project" value="PomBase"/>
</dbReference>
<dbReference type="CDD" id="cd03388">
    <property type="entry name" value="PAP2_SPPase1"/>
    <property type="match status" value="1"/>
</dbReference>
<dbReference type="Gene3D" id="1.20.144.10">
    <property type="entry name" value="Phosphatidic acid phosphatase type 2/haloperoxidase"/>
    <property type="match status" value="1"/>
</dbReference>
<dbReference type="InterPro" id="IPR036938">
    <property type="entry name" value="P_Acid_Pase_2/haloperoxi_sf"/>
</dbReference>
<dbReference type="InterPro" id="IPR000326">
    <property type="entry name" value="P_Acid_Pase_2/haloperoxidase"/>
</dbReference>
<dbReference type="PANTHER" id="PTHR14969:SF28">
    <property type="entry name" value="DIHYDROSPHINGOSINE 1-PHOSPHATE PHOSPHATASE LCB3-RELATED"/>
    <property type="match status" value="1"/>
</dbReference>
<dbReference type="PANTHER" id="PTHR14969">
    <property type="entry name" value="SPHINGOSINE-1-PHOSPHATE PHOSPHOHYDROLASE"/>
    <property type="match status" value="1"/>
</dbReference>
<dbReference type="Pfam" id="PF01569">
    <property type="entry name" value="PAP2"/>
    <property type="match status" value="1"/>
</dbReference>
<dbReference type="SMART" id="SM00014">
    <property type="entry name" value="acidPPc"/>
    <property type="match status" value="1"/>
</dbReference>
<dbReference type="SUPFAM" id="SSF48317">
    <property type="entry name" value="Acid phosphatase/Vanadium-dependent haloperoxidase"/>
    <property type="match status" value="1"/>
</dbReference>
<comment type="function">
    <text evidence="1">Dihydrosphingosine 1-phosphate phosphatase required for efficient ceramide synthesis from exogenous sphingoid bases. Involved in endocytosis and calcium-mediated signaling (By similarity).</text>
</comment>
<comment type="subcellular location">
    <subcellularLocation>
        <location evidence="1">Endoplasmic reticulum membrane</location>
        <topology evidence="1">Multi-pass membrane protein</topology>
    </subcellularLocation>
</comment>
<comment type="similarity">
    <text evidence="4">Belongs to the type 2 lipid phosphate phosphatase family.</text>
</comment>
<organism>
    <name type="scientific">Schizosaccharomyces pombe (strain 972 / ATCC 24843)</name>
    <name type="common">Fission yeast</name>
    <dbReference type="NCBI Taxonomy" id="284812"/>
    <lineage>
        <taxon>Eukaryota</taxon>
        <taxon>Fungi</taxon>
        <taxon>Dikarya</taxon>
        <taxon>Ascomycota</taxon>
        <taxon>Taphrinomycotina</taxon>
        <taxon>Schizosaccharomycetes</taxon>
        <taxon>Schizosaccharomycetales</taxon>
        <taxon>Schizosaccharomycetaceae</taxon>
        <taxon>Schizosaccharomyces</taxon>
    </lineage>
</organism>